<proteinExistence type="inferred from homology"/>
<feature type="chain" id="PRO_1000060734" description="Acyl-[acyl-carrier-protein]--UDP-N-acetylglucosamine O-acyltransferase">
    <location>
        <begin position="1"/>
        <end position="262"/>
    </location>
</feature>
<dbReference type="EC" id="2.3.1.129" evidence="1"/>
<dbReference type="EMBL" id="CP000653">
    <property type="protein sequence ID" value="ABP59406.1"/>
    <property type="molecule type" value="Genomic_DNA"/>
</dbReference>
<dbReference type="RefSeq" id="WP_012016127.1">
    <property type="nucleotide sequence ID" value="NC_009436.1"/>
</dbReference>
<dbReference type="SMR" id="A4W6S6"/>
<dbReference type="STRING" id="399742.Ent638_0719"/>
<dbReference type="KEGG" id="ent:Ent638_0719"/>
<dbReference type="eggNOG" id="COG1043">
    <property type="taxonomic scope" value="Bacteria"/>
</dbReference>
<dbReference type="HOGENOM" id="CLU_061249_0_0_6"/>
<dbReference type="OrthoDB" id="9807278at2"/>
<dbReference type="UniPathway" id="UPA00359">
    <property type="reaction ID" value="UER00477"/>
</dbReference>
<dbReference type="Proteomes" id="UP000000230">
    <property type="component" value="Chromosome"/>
</dbReference>
<dbReference type="GO" id="GO:0005737">
    <property type="term" value="C:cytoplasm"/>
    <property type="evidence" value="ECO:0007669"/>
    <property type="project" value="UniProtKB-SubCell"/>
</dbReference>
<dbReference type="GO" id="GO:0016020">
    <property type="term" value="C:membrane"/>
    <property type="evidence" value="ECO:0007669"/>
    <property type="project" value="GOC"/>
</dbReference>
<dbReference type="GO" id="GO:0008780">
    <property type="term" value="F:acyl-[acyl-carrier-protein]-UDP-N-acetylglucosamine O-acyltransferase activity"/>
    <property type="evidence" value="ECO:0007669"/>
    <property type="project" value="UniProtKB-UniRule"/>
</dbReference>
<dbReference type="GO" id="GO:0009245">
    <property type="term" value="P:lipid A biosynthetic process"/>
    <property type="evidence" value="ECO:0007669"/>
    <property type="project" value="UniProtKB-UniRule"/>
</dbReference>
<dbReference type="CDD" id="cd03351">
    <property type="entry name" value="LbH_UDP-GlcNAc_AT"/>
    <property type="match status" value="1"/>
</dbReference>
<dbReference type="FunFam" id="1.20.1180.10:FF:000001">
    <property type="entry name" value="Acyl-[acyl-carrier-protein]--UDP-N-acetylglucosamine O-acyltransferase"/>
    <property type="match status" value="1"/>
</dbReference>
<dbReference type="FunFam" id="2.160.10.10:FF:000003">
    <property type="entry name" value="Acyl-[acyl-carrier-protein]--UDP-N-acetylglucosamine O-acyltransferase"/>
    <property type="match status" value="1"/>
</dbReference>
<dbReference type="Gene3D" id="2.160.10.10">
    <property type="entry name" value="Hexapeptide repeat proteins"/>
    <property type="match status" value="1"/>
</dbReference>
<dbReference type="Gene3D" id="1.20.1180.10">
    <property type="entry name" value="Udp N-acetylglucosamine O-acyltransferase, C-terminal domain"/>
    <property type="match status" value="1"/>
</dbReference>
<dbReference type="HAMAP" id="MF_00387">
    <property type="entry name" value="LpxA"/>
    <property type="match status" value="1"/>
</dbReference>
<dbReference type="InterPro" id="IPR029098">
    <property type="entry name" value="Acetyltransf_C"/>
</dbReference>
<dbReference type="InterPro" id="IPR037157">
    <property type="entry name" value="Acetyltransf_C_sf"/>
</dbReference>
<dbReference type="InterPro" id="IPR001451">
    <property type="entry name" value="Hexapep"/>
</dbReference>
<dbReference type="InterPro" id="IPR018357">
    <property type="entry name" value="Hexapep_transf_CS"/>
</dbReference>
<dbReference type="InterPro" id="IPR010137">
    <property type="entry name" value="Lipid_A_LpxA"/>
</dbReference>
<dbReference type="InterPro" id="IPR011004">
    <property type="entry name" value="Trimer_LpxA-like_sf"/>
</dbReference>
<dbReference type="NCBIfam" id="TIGR01852">
    <property type="entry name" value="lipid_A_lpxA"/>
    <property type="match status" value="1"/>
</dbReference>
<dbReference type="NCBIfam" id="NF003657">
    <property type="entry name" value="PRK05289.1"/>
    <property type="match status" value="1"/>
</dbReference>
<dbReference type="PANTHER" id="PTHR43480">
    <property type="entry name" value="ACYL-[ACYL-CARRIER-PROTEIN]--UDP-N-ACETYLGLUCOSAMINE O-ACYLTRANSFERASE"/>
    <property type="match status" value="1"/>
</dbReference>
<dbReference type="PANTHER" id="PTHR43480:SF1">
    <property type="entry name" value="ACYL-[ACYL-CARRIER-PROTEIN]--UDP-N-ACETYLGLUCOSAMINE O-ACYLTRANSFERASE, MITOCHONDRIAL-RELATED"/>
    <property type="match status" value="1"/>
</dbReference>
<dbReference type="Pfam" id="PF13720">
    <property type="entry name" value="Acetyltransf_11"/>
    <property type="match status" value="1"/>
</dbReference>
<dbReference type="Pfam" id="PF00132">
    <property type="entry name" value="Hexapep"/>
    <property type="match status" value="2"/>
</dbReference>
<dbReference type="PIRSF" id="PIRSF000456">
    <property type="entry name" value="UDP-GlcNAc_acltr"/>
    <property type="match status" value="1"/>
</dbReference>
<dbReference type="SUPFAM" id="SSF51161">
    <property type="entry name" value="Trimeric LpxA-like enzymes"/>
    <property type="match status" value="1"/>
</dbReference>
<dbReference type="PROSITE" id="PS00101">
    <property type="entry name" value="HEXAPEP_TRANSFERASES"/>
    <property type="match status" value="2"/>
</dbReference>
<gene>
    <name evidence="1" type="primary">lpxA</name>
    <name type="ordered locus">Ent638_0719</name>
</gene>
<evidence type="ECO:0000255" key="1">
    <source>
        <dbReference type="HAMAP-Rule" id="MF_00387"/>
    </source>
</evidence>
<organism>
    <name type="scientific">Enterobacter sp. (strain 638)</name>
    <dbReference type="NCBI Taxonomy" id="399742"/>
    <lineage>
        <taxon>Bacteria</taxon>
        <taxon>Pseudomonadati</taxon>
        <taxon>Pseudomonadota</taxon>
        <taxon>Gammaproteobacteria</taxon>
        <taxon>Enterobacterales</taxon>
        <taxon>Enterobacteriaceae</taxon>
        <taxon>Enterobacter</taxon>
    </lineage>
</organism>
<comment type="function">
    <text evidence="1">Involved in the biosynthesis of lipid A, a phosphorylated glycolipid that anchors the lipopolysaccharide to the outer membrane of the cell.</text>
</comment>
<comment type="catalytic activity">
    <reaction evidence="1">
        <text>a (3R)-hydroxyacyl-[ACP] + UDP-N-acetyl-alpha-D-glucosamine = a UDP-3-O-[(3R)-3-hydroxyacyl]-N-acetyl-alpha-D-glucosamine + holo-[ACP]</text>
        <dbReference type="Rhea" id="RHEA:67812"/>
        <dbReference type="Rhea" id="RHEA-COMP:9685"/>
        <dbReference type="Rhea" id="RHEA-COMP:9945"/>
        <dbReference type="ChEBI" id="CHEBI:57705"/>
        <dbReference type="ChEBI" id="CHEBI:64479"/>
        <dbReference type="ChEBI" id="CHEBI:78827"/>
        <dbReference type="ChEBI" id="CHEBI:173225"/>
        <dbReference type="EC" id="2.3.1.129"/>
    </reaction>
</comment>
<comment type="pathway">
    <text evidence="1">Glycolipid biosynthesis; lipid IV(A) biosynthesis; lipid IV(A) from (3R)-3-hydroxytetradecanoyl-[acyl-carrier-protein] and UDP-N-acetyl-alpha-D-glucosamine: step 1/6.</text>
</comment>
<comment type="subunit">
    <text evidence="1">Homotrimer.</text>
</comment>
<comment type="subcellular location">
    <subcellularLocation>
        <location evidence="1">Cytoplasm</location>
    </subcellularLocation>
</comment>
<comment type="similarity">
    <text evidence="1">Belongs to the transferase hexapeptide repeat family. LpxA subfamily.</text>
</comment>
<accession>A4W6S6</accession>
<name>LPXA_ENT38</name>
<reference key="1">
    <citation type="journal article" date="2010" name="PLoS Genet.">
        <title>Genome sequence of the plant growth promoting endophytic bacterium Enterobacter sp. 638.</title>
        <authorList>
            <person name="Taghavi S."/>
            <person name="van der Lelie D."/>
            <person name="Hoffman A."/>
            <person name="Zhang Y.B."/>
            <person name="Walla M.D."/>
            <person name="Vangronsveld J."/>
            <person name="Newman L."/>
            <person name="Monchy S."/>
        </authorList>
    </citation>
    <scope>NUCLEOTIDE SEQUENCE [LARGE SCALE GENOMIC DNA]</scope>
    <source>
        <strain>638</strain>
    </source>
</reference>
<protein>
    <recommendedName>
        <fullName evidence="1">Acyl-[acyl-carrier-protein]--UDP-N-acetylglucosamine O-acyltransferase</fullName>
        <shortName evidence="1">UDP-N-acetylglucosamine acyltransferase</shortName>
        <ecNumber evidence="1">2.3.1.129</ecNumber>
    </recommendedName>
</protein>
<sequence length="262" mass="28101">MIDKTAFIHPTAIVEEGAVIGANAHIGPFCIVGPHVVIGEGTVLKSHVVVNGHTIIGRDNEIYQFASIGEVNQDLKYAGEPTRLEIGDRNRIRESVTIHRGTVQGGGLTKVGSDNLFMVNAHIAHDCTVGSRCILANNATLAGHVSVDDFAIIGGMTAVHQFCIIGAHVMIGGCSGVAQDVPPYVIAQGNHATPFGVNIEGLKRRGFSREAITAIRNAYKLMYRSGKTLEEAKPEVAALAEQHPEVKAFTEFFERSTRGLIR</sequence>
<keyword id="KW-0012">Acyltransferase</keyword>
<keyword id="KW-0963">Cytoplasm</keyword>
<keyword id="KW-0441">Lipid A biosynthesis</keyword>
<keyword id="KW-0444">Lipid biosynthesis</keyword>
<keyword id="KW-0443">Lipid metabolism</keyword>
<keyword id="KW-0677">Repeat</keyword>
<keyword id="KW-0808">Transferase</keyword>